<keyword id="KW-0646">Protease inhibitor</keyword>
<keyword id="KW-1185">Reference proteome</keyword>
<keyword id="KW-0722">Serine protease inhibitor</keyword>
<organismHost>
    <name type="scientific">Vertebrata</name>
    <dbReference type="NCBI Taxonomy" id="7742"/>
</organismHost>
<reference key="1">
    <citation type="journal article" date="2000" name="J. Virol.">
        <title>The genome of fowlpox virus.</title>
        <authorList>
            <person name="Afonso C.L."/>
            <person name="Tulman E.R."/>
            <person name="Lu Z."/>
            <person name="Zsak L."/>
            <person name="Kutish G.F."/>
            <person name="Rock D.L."/>
        </authorList>
    </citation>
    <scope>NUCLEOTIDE SEQUENCE [LARGE SCALE GENOMIC DNA]</scope>
</reference>
<proteinExistence type="inferred from homology"/>
<gene>
    <name type="ordered locus">FPV010</name>
</gene>
<protein>
    <recommendedName>
        <fullName>Uncharacterized serpin-like protein FPV010</fullName>
    </recommendedName>
</protein>
<name>V010_FOWPN</name>
<sequence length="355" mass="40617">MGSLVRLLKELYVPGKDICISPRGVYTILMNIMIGCKKETRDKIKDLLGIFGNYVPIPDKSEYYVEYYDDKDELINKSIMLIEEGYPIKRDFINSSYDIFNAKVVSFTDDTISETINKWVELSTRGLIKDFSISLADDIRLAIINVLYFKSKWKYPFDTELTSKHPFKKYNGTDVMIDTMMIQDVAFYYKHDEDIRSQVVMLEYEDYRFVMFIIIPDSVTGIDGVVDSLNNGKNINKIISKKDMTLKEIVLYLPKFELEDDVDLKDALIHMGCNDLFKSGELVGISDTKTLRIGNIRQKSVIKVDEYGTEAASVTESCTTDGIKKIPIVKANVPFMFLVADVQTKIPLFLGIFQG</sequence>
<comment type="similarity">
    <text evidence="1">Belongs to the serpin family. Poxviruses subfamily.</text>
</comment>
<evidence type="ECO:0000305" key="1"/>
<dbReference type="EMBL" id="AF198100">
    <property type="protein sequence ID" value="AAF44354.1"/>
    <property type="molecule type" value="Genomic_DNA"/>
</dbReference>
<dbReference type="RefSeq" id="NP_038973.1">
    <property type="nucleotide sequence ID" value="NC_002188.1"/>
</dbReference>
<dbReference type="SMR" id="Q9J5J1"/>
<dbReference type="GeneID" id="1486729"/>
<dbReference type="KEGG" id="vg:1486729"/>
<dbReference type="Proteomes" id="UP000008597">
    <property type="component" value="Segment"/>
</dbReference>
<dbReference type="GO" id="GO:0005615">
    <property type="term" value="C:extracellular space"/>
    <property type="evidence" value="ECO:0007669"/>
    <property type="project" value="InterPro"/>
</dbReference>
<dbReference type="GO" id="GO:0004867">
    <property type="term" value="F:serine-type endopeptidase inhibitor activity"/>
    <property type="evidence" value="ECO:0007669"/>
    <property type="project" value="UniProtKB-KW"/>
</dbReference>
<dbReference type="CDD" id="cd00172">
    <property type="entry name" value="serpin"/>
    <property type="match status" value="1"/>
</dbReference>
<dbReference type="Gene3D" id="2.30.39.10">
    <property type="entry name" value="Alpha-1-antitrypsin, domain 1"/>
    <property type="match status" value="1"/>
</dbReference>
<dbReference type="Gene3D" id="3.30.497.10">
    <property type="entry name" value="Antithrombin, subunit I, domain 2"/>
    <property type="match status" value="1"/>
</dbReference>
<dbReference type="InterPro" id="IPR023796">
    <property type="entry name" value="Serpin_dom"/>
</dbReference>
<dbReference type="InterPro" id="IPR000215">
    <property type="entry name" value="Serpin_fam"/>
</dbReference>
<dbReference type="InterPro" id="IPR036186">
    <property type="entry name" value="Serpin_sf"/>
</dbReference>
<dbReference type="InterPro" id="IPR042178">
    <property type="entry name" value="Serpin_sf_1"/>
</dbReference>
<dbReference type="InterPro" id="IPR042185">
    <property type="entry name" value="Serpin_sf_2"/>
</dbReference>
<dbReference type="PANTHER" id="PTHR11461:SF211">
    <property type="entry name" value="GH10112P-RELATED"/>
    <property type="match status" value="1"/>
</dbReference>
<dbReference type="PANTHER" id="PTHR11461">
    <property type="entry name" value="SERINE PROTEASE INHIBITOR, SERPIN"/>
    <property type="match status" value="1"/>
</dbReference>
<dbReference type="Pfam" id="PF00079">
    <property type="entry name" value="Serpin"/>
    <property type="match status" value="1"/>
</dbReference>
<dbReference type="SMART" id="SM00093">
    <property type="entry name" value="SERPIN"/>
    <property type="match status" value="1"/>
</dbReference>
<dbReference type="SUPFAM" id="SSF56574">
    <property type="entry name" value="Serpins"/>
    <property type="match status" value="1"/>
</dbReference>
<accession>Q9J5J1</accession>
<organism>
    <name type="scientific">Fowlpox virus (strain NVSL)</name>
    <name type="common">FPV</name>
    <dbReference type="NCBI Taxonomy" id="928301"/>
    <lineage>
        <taxon>Viruses</taxon>
        <taxon>Varidnaviria</taxon>
        <taxon>Bamfordvirae</taxon>
        <taxon>Nucleocytoviricota</taxon>
        <taxon>Pokkesviricetes</taxon>
        <taxon>Chitovirales</taxon>
        <taxon>Poxviridae</taxon>
        <taxon>Chordopoxvirinae</taxon>
        <taxon>Avipoxvirus</taxon>
        <taxon>Fowlpox virus</taxon>
    </lineage>
</organism>
<feature type="chain" id="PRO_0000094154" description="Uncharacterized serpin-like protein FPV010">
    <location>
        <begin position="1"/>
        <end position="355"/>
    </location>
</feature>